<comment type="function">
    <text evidence="1">Catalyzes the NADPH-dependent reduction of L-glutamate 5-phosphate into L-glutamate 5-semialdehyde and phosphate. The product spontaneously undergoes cyclization to form 1-pyrroline-5-carboxylate.</text>
</comment>
<comment type="catalytic activity">
    <reaction evidence="1">
        <text>L-glutamate 5-semialdehyde + phosphate + NADP(+) = L-glutamyl 5-phosphate + NADPH + H(+)</text>
        <dbReference type="Rhea" id="RHEA:19541"/>
        <dbReference type="ChEBI" id="CHEBI:15378"/>
        <dbReference type="ChEBI" id="CHEBI:43474"/>
        <dbReference type="ChEBI" id="CHEBI:57783"/>
        <dbReference type="ChEBI" id="CHEBI:58066"/>
        <dbReference type="ChEBI" id="CHEBI:58274"/>
        <dbReference type="ChEBI" id="CHEBI:58349"/>
        <dbReference type="EC" id="1.2.1.41"/>
    </reaction>
</comment>
<comment type="pathway">
    <text evidence="1">Amino-acid biosynthesis; L-proline biosynthesis; L-glutamate 5-semialdehyde from L-glutamate: step 2/2.</text>
</comment>
<comment type="subcellular location">
    <subcellularLocation>
        <location evidence="1">Cytoplasm</location>
    </subcellularLocation>
</comment>
<comment type="similarity">
    <text evidence="1">Belongs to the gamma-glutamyl phosphate reductase family.</text>
</comment>
<protein>
    <recommendedName>
        <fullName evidence="1">Gamma-glutamyl phosphate reductase</fullName>
        <shortName evidence="1">GPR</shortName>
        <ecNumber evidence="1">1.2.1.41</ecNumber>
    </recommendedName>
    <alternativeName>
        <fullName evidence="1">Glutamate-5-semialdehyde dehydrogenase</fullName>
    </alternativeName>
    <alternativeName>
        <fullName evidence="1">Glutamyl-gamma-semialdehyde dehydrogenase</fullName>
        <shortName evidence="1">GSA dehydrogenase</shortName>
    </alternativeName>
</protein>
<gene>
    <name evidence="1" type="primary">proA</name>
    <name type="ordered locus">H16_A3136</name>
</gene>
<proteinExistence type="inferred from homology"/>
<name>PROA_CUPNH</name>
<accession>Q0K710</accession>
<sequence>MNELDLNQYMDRVGRQARAASRAMARASTADKNRALLTIAAAIRRDADKLKAVNARDVERARANGQDAAFIDRLTLSDKAIATMAAGLGQIAALADPIGEISNMKFRPTGIQVGQMRVPLGVIGIIYESRPNVTIDAAALCLKSGNATILRGGSEAIESNTALAALVAEGLSAAGLPSEAVQVIETTDRAAVGRLITMTEYVDVIVPRGGKSLIARLMEEARVPMIKHLDGICHVYIDADADLDKAVRVCDNAKTQRYAPCNTMETLLVSQDIAAAALPPLCRIYQEKGVELRVCPATRATLEAAGFTGLVDAAEEDWRLEYLAPILAIKTVAGLDDAIAHINEYGSHHTDSIITENYSAGMRFIREVDSASVMINASTRFADGFEYGLGAEIGISNDKLHARGPVGLEGLTSLKYVVFGHGEIRT</sequence>
<keyword id="KW-0028">Amino-acid biosynthesis</keyword>
<keyword id="KW-0963">Cytoplasm</keyword>
<keyword id="KW-0521">NADP</keyword>
<keyword id="KW-0560">Oxidoreductase</keyword>
<keyword id="KW-0641">Proline biosynthesis</keyword>
<keyword id="KW-1185">Reference proteome</keyword>
<feature type="chain" id="PRO_1000049988" description="Gamma-glutamyl phosphate reductase">
    <location>
        <begin position="1"/>
        <end position="426"/>
    </location>
</feature>
<reference key="1">
    <citation type="journal article" date="2006" name="Nat. Biotechnol.">
        <title>Genome sequence of the bioplastic-producing 'Knallgas' bacterium Ralstonia eutropha H16.</title>
        <authorList>
            <person name="Pohlmann A."/>
            <person name="Fricke W.F."/>
            <person name="Reinecke F."/>
            <person name="Kusian B."/>
            <person name="Liesegang H."/>
            <person name="Cramm R."/>
            <person name="Eitinger T."/>
            <person name="Ewering C."/>
            <person name="Poetter M."/>
            <person name="Schwartz E."/>
            <person name="Strittmatter A."/>
            <person name="Voss I."/>
            <person name="Gottschalk G."/>
            <person name="Steinbuechel A."/>
            <person name="Friedrich B."/>
            <person name="Bowien B."/>
        </authorList>
    </citation>
    <scope>NUCLEOTIDE SEQUENCE [LARGE SCALE GENOMIC DNA]</scope>
    <source>
        <strain>ATCC 17699 / DSM 428 / KCTC 22496 / NCIMB 10442 / H16 / Stanier 337</strain>
    </source>
</reference>
<evidence type="ECO:0000255" key="1">
    <source>
        <dbReference type="HAMAP-Rule" id="MF_00412"/>
    </source>
</evidence>
<organism>
    <name type="scientific">Cupriavidus necator (strain ATCC 17699 / DSM 428 / KCTC 22496 / NCIMB 10442 / H16 / Stanier 337)</name>
    <name type="common">Ralstonia eutropha</name>
    <dbReference type="NCBI Taxonomy" id="381666"/>
    <lineage>
        <taxon>Bacteria</taxon>
        <taxon>Pseudomonadati</taxon>
        <taxon>Pseudomonadota</taxon>
        <taxon>Betaproteobacteria</taxon>
        <taxon>Burkholderiales</taxon>
        <taxon>Burkholderiaceae</taxon>
        <taxon>Cupriavidus</taxon>
    </lineage>
</organism>
<dbReference type="EC" id="1.2.1.41" evidence="1"/>
<dbReference type="EMBL" id="AM260479">
    <property type="protein sequence ID" value="CAJ94211.1"/>
    <property type="molecule type" value="Genomic_DNA"/>
</dbReference>
<dbReference type="RefSeq" id="WP_011616006.1">
    <property type="nucleotide sequence ID" value="NC_008313.1"/>
</dbReference>
<dbReference type="SMR" id="Q0K710"/>
<dbReference type="STRING" id="381666.H16_A3136"/>
<dbReference type="KEGG" id="reh:H16_A3136"/>
<dbReference type="PATRIC" id="fig|381666.6.peg.3543"/>
<dbReference type="eggNOG" id="COG0014">
    <property type="taxonomic scope" value="Bacteria"/>
</dbReference>
<dbReference type="HOGENOM" id="CLU_030231_0_0_4"/>
<dbReference type="OrthoDB" id="9809970at2"/>
<dbReference type="UniPathway" id="UPA00098">
    <property type="reaction ID" value="UER00360"/>
</dbReference>
<dbReference type="Proteomes" id="UP000008210">
    <property type="component" value="Chromosome 1"/>
</dbReference>
<dbReference type="GO" id="GO:0005737">
    <property type="term" value="C:cytoplasm"/>
    <property type="evidence" value="ECO:0007669"/>
    <property type="project" value="UniProtKB-SubCell"/>
</dbReference>
<dbReference type="GO" id="GO:0004350">
    <property type="term" value="F:glutamate-5-semialdehyde dehydrogenase activity"/>
    <property type="evidence" value="ECO:0007669"/>
    <property type="project" value="UniProtKB-UniRule"/>
</dbReference>
<dbReference type="GO" id="GO:0050661">
    <property type="term" value="F:NADP binding"/>
    <property type="evidence" value="ECO:0007669"/>
    <property type="project" value="InterPro"/>
</dbReference>
<dbReference type="GO" id="GO:0055129">
    <property type="term" value="P:L-proline biosynthetic process"/>
    <property type="evidence" value="ECO:0007669"/>
    <property type="project" value="UniProtKB-UniRule"/>
</dbReference>
<dbReference type="CDD" id="cd07079">
    <property type="entry name" value="ALDH_F18-19_ProA-GPR"/>
    <property type="match status" value="1"/>
</dbReference>
<dbReference type="FunFam" id="3.40.309.10:FF:000006">
    <property type="entry name" value="Gamma-glutamyl phosphate reductase"/>
    <property type="match status" value="1"/>
</dbReference>
<dbReference type="Gene3D" id="3.40.605.10">
    <property type="entry name" value="Aldehyde Dehydrogenase, Chain A, domain 1"/>
    <property type="match status" value="1"/>
</dbReference>
<dbReference type="Gene3D" id="3.40.309.10">
    <property type="entry name" value="Aldehyde Dehydrogenase, Chain A, domain 2"/>
    <property type="match status" value="1"/>
</dbReference>
<dbReference type="HAMAP" id="MF_00412">
    <property type="entry name" value="ProA"/>
    <property type="match status" value="1"/>
</dbReference>
<dbReference type="InterPro" id="IPR016161">
    <property type="entry name" value="Ald_DH/histidinol_DH"/>
</dbReference>
<dbReference type="InterPro" id="IPR016163">
    <property type="entry name" value="Ald_DH_C"/>
</dbReference>
<dbReference type="InterPro" id="IPR016162">
    <property type="entry name" value="Ald_DH_N"/>
</dbReference>
<dbReference type="InterPro" id="IPR015590">
    <property type="entry name" value="Aldehyde_DH_dom"/>
</dbReference>
<dbReference type="InterPro" id="IPR020593">
    <property type="entry name" value="G-glutamylP_reductase_CS"/>
</dbReference>
<dbReference type="InterPro" id="IPR012134">
    <property type="entry name" value="Glu-5-SA_DH"/>
</dbReference>
<dbReference type="InterPro" id="IPR000965">
    <property type="entry name" value="GPR_dom"/>
</dbReference>
<dbReference type="NCBIfam" id="NF001221">
    <property type="entry name" value="PRK00197.1"/>
    <property type="match status" value="1"/>
</dbReference>
<dbReference type="NCBIfam" id="TIGR00407">
    <property type="entry name" value="proA"/>
    <property type="match status" value="1"/>
</dbReference>
<dbReference type="PANTHER" id="PTHR11063:SF8">
    <property type="entry name" value="DELTA-1-PYRROLINE-5-CARBOXYLATE SYNTHASE"/>
    <property type="match status" value="1"/>
</dbReference>
<dbReference type="PANTHER" id="PTHR11063">
    <property type="entry name" value="GLUTAMATE SEMIALDEHYDE DEHYDROGENASE"/>
    <property type="match status" value="1"/>
</dbReference>
<dbReference type="Pfam" id="PF00171">
    <property type="entry name" value="Aldedh"/>
    <property type="match status" value="2"/>
</dbReference>
<dbReference type="PIRSF" id="PIRSF000151">
    <property type="entry name" value="GPR"/>
    <property type="match status" value="1"/>
</dbReference>
<dbReference type="SUPFAM" id="SSF53720">
    <property type="entry name" value="ALDH-like"/>
    <property type="match status" value="1"/>
</dbReference>
<dbReference type="PROSITE" id="PS01223">
    <property type="entry name" value="PROA"/>
    <property type="match status" value="1"/>
</dbReference>